<dbReference type="EC" id="3.6.1.-" evidence="1"/>
<dbReference type="EMBL" id="CP000468">
    <property type="protein sequence ID" value="ABI99904.1"/>
    <property type="status" value="ALT_INIT"/>
    <property type="molecule type" value="Genomic_DNA"/>
</dbReference>
<dbReference type="RefSeq" id="WP_000113027.1">
    <property type="nucleotide sequence ID" value="NZ_CADILS010000009.1"/>
</dbReference>
<dbReference type="SMR" id="A1A8B5"/>
<dbReference type="GeneID" id="93777004"/>
<dbReference type="KEGG" id="ecv:APECO1_1565"/>
<dbReference type="HOGENOM" id="CLU_044146_5_2_6"/>
<dbReference type="Proteomes" id="UP000008216">
    <property type="component" value="Chromosome"/>
</dbReference>
<dbReference type="GO" id="GO:0002145">
    <property type="term" value="F:4-amino-5-hydroxymethyl-2-methylpyrimidine diphosphatase activity"/>
    <property type="evidence" value="ECO:0007669"/>
    <property type="project" value="RHEA"/>
</dbReference>
<dbReference type="GO" id="GO:0000287">
    <property type="term" value="F:magnesium ion binding"/>
    <property type="evidence" value="ECO:0000250"/>
    <property type="project" value="UniProtKB"/>
</dbReference>
<dbReference type="GO" id="GO:0016791">
    <property type="term" value="F:phosphatase activity"/>
    <property type="evidence" value="ECO:0000250"/>
    <property type="project" value="UniProtKB"/>
</dbReference>
<dbReference type="CDD" id="cd07516">
    <property type="entry name" value="HAD_Pase"/>
    <property type="match status" value="1"/>
</dbReference>
<dbReference type="FunFam" id="3.30.1240.10:FF:000002">
    <property type="entry name" value="HMP-PP phosphatase"/>
    <property type="match status" value="1"/>
</dbReference>
<dbReference type="Gene3D" id="3.30.1240.10">
    <property type="match status" value="1"/>
</dbReference>
<dbReference type="Gene3D" id="3.40.50.1000">
    <property type="entry name" value="HAD superfamily/HAD-like"/>
    <property type="match status" value="1"/>
</dbReference>
<dbReference type="HAMAP" id="MF_01847">
    <property type="entry name" value="HMP_PP_phosphat"/>
    <property type="match status" value="1"/>
</dbReference>
<dbReference type="InterPro" id="IPR000150">
    <property type="entry name" value="Cof"/>
</dbReference>
<dbReference type="InterPro" id="IPR036412">
    <property type="entry name" value="HAD-like_sf"/>
</dbReference>
<dbReference type="InterPro" id="IPR006379">
    <property type="entry name" value="HAD-SF_hydro_IIB"/>
</dbReference>
<dbReference type="InterPro" id="IPR023214">
    <property type="entry name" value="HAD_sf"/>
</dbReference>
<dbReference type="InterPro" id="IPR023938">
    <property type="entry name" value="HMP-PP_phosphatase"/>
</dbReference>
<dbReference type="NCBIfam" id="TIGR00099">
    <property type="entry name" value="Cof-subfamily"/>
    <property type="match status" value="1"/>
</dbReference>
<dbReference type="NCBIfam" id="TIGR01484">
    <property type="entry name" value="HAD-SF-IIB"/>
    <property type="match status" value="1"/>
</dbReference>
<dbReference type="NCBIfam" id="NF011705">
    <property type="entry name" value="PRK15126.1"/>
    <property type="match status" value="1"/>
</dbReference>
<dbReference type="PANTHER" id="PTHR47267">
    <property type="match status" value="1"/>
</dbReference>
<dbReference type="PANTHER" id="PTHR47267:SF2">
    <property type="entry name" value="HMP-PP PHOSPHATASE"/>
    <property type="match status" value="1"/>
</dbReference>
<dbReference type="Pfam" id="PF08282">
    <property type="entry name" value="Hydrolase_3"/>
    <property type="match status" value="1"/>
</dbReference>
<dbReference type="SFLD" id="SFLDG01140">
    <property type="entry name" value="C2.B:_Phosphomannomutase_and_P"/>
    <property type="match status" value="1"/>
</dbReference>
<dbReference type="SFLD" id="SFLDS00003">
    <property type="entry name" value="Haloacid_Dehalogenase"/>
    <property type="match status" value="1"/>
</dbReference>
<dbReference type="SUPFAM" id="SSF56784">
    <property type="entry name" value="HAD-like"/>
    <property type="match status" value="1"/>
</dbReference>
<dbReference type="PROSITE" id="PS01228">
    <property type="entry name" value="COF_1"/>
    <property type="match status" value="1"/>
</dbReference>
<dbReference type="PROSITE" id="PS01229">
    <property type="entry name" value="COF_2"/>
    <property type="match status" value="1"/>
</dbReference>
<gene>
    <name evidence="1" type="primary">cof</name>
    <name type="ordered locus">Ecok1_04110</name>
    <name type="ORF">APECO1_1565</name>
</gene>
<feature type="chain" id="PRO_0000342983" description="HMP-PP phosphatase">
    <location>
        <begin position="1"/>
        <end position="272"/>
    </location>
</feature>
<feature type="active site" description="Nucleophile" evidence="1">
    <location>
        <position position="8"/>
    </location>
</feature>
<feature type="binding site" evidence="1">
    <location>
        <position position="8"/>
    </location>
    <ligand>
        <name>Mg(2+)</name>
        <dbReference type="ChEBI" id="CHEBI:18420"/>
    </ligand>
</feature>
<feature type="binding site" evidence="1">
    <location>
        <position position="10"/>
    </location>
    <ligand>
        <name>Mg(2+)</name>
        <dbReference type="ChEBI" id="CHEBI:18420"/>
    </ligand>
</feature>
<feature type="binding site" evidence="1">
    <location>
        <position position="212"/>
    </location>
    <ligand>
        <name>Mg(2+)</name>
        <dbReference type="ChEBI" id="CHEBI:18420"/>
    </ligand>
</feature>
<name>COF_ECOK1</name>
<keyword id="KW-0378">Hydrolase</keyword>
<keyword id="KW-0460">Magnesium</keyword>
<keyword id="KW-0479">Metal-binding</keyword>
<keyword id="KW-1185">Reference proteome</keyword>
<accession>A1A8B5</accession>
<proteinExistence type="inferred from homology"/>
<evidence type="ECO:0000255" key="1">
    <source>
        <dbReference type="HAMAP-Rule" id="MF_01847"/>
    </source>
</evidence>
<evidence type="ECO:0000305" key="2"/>
<sequence length="272" mass="30329">MARLAAFDMDGTLLMPDHHLGEKTLSTLARLRERDITLTFATGRHALEMQHILGALSLDAYLITGNGTRVHSLEGELLHRDDLPADVAELVLYQQWDTRASMHIFNDDGWFTGKEIPALLQAFVYSGFRYQIIDVKKMPLGSVTKICFCGDHDDLTRLQIQLYEALGERAHLCFSATDCLEVLPVGCNKGAALTVLTQHLGLSLRDCMAFGDAMNDREMLGSVGSGFIMGNAMPQLRAELPHLPVIGHCRNQAVSHYLTHWLDYPHLPYSPE</sequence>
<protein>
    <recommendedName>
        <fullName evidence="1">HMP-PP phosphatase</fullName>
        <ecNumber evidence="1">3.6.1.-</ecNumber>
    </recommendedName>
</protein>
<reference key="1">
    <citation type="journal article" date="2007" name="J. Bacteriol.">
        <title>The genome sequence of avian pathogenic Escherichia coli strain O1:K1:H7 shares strong similarities with human extraintestinal pathogenic E. coli genomes.</title>
        <authorList>
            <person name="Johnson T.J."/>
            <person name="Kariyawasam S."/>
            <person name="Wannemuehler Y."/>
            <person name="Mangiamele P."/>
            <person name="Johnson S.J."/>
            <person name="Doetkott C."/>
            <person name="Skyberg J.A."/>
            <person name="Lynne A.M."/>
            <person name="Johnson J.R."/>
            <person name="Nolan L.K."/>
        </authorList>
    </citation>
    <scope>NUCLEOTIDE SEQUENCE [LARGE SCALE GENOMIC DNA]</scope>
</reference>
<comment type="function">
    <text evidence="1">Catalyzes the hydrolysis of 4-amino-2-methyl-5-hydroxymethylpyrimidine pyrophosphate (HMP-PP) to 4-amino-2-methyl-5-hydroxymethylpyrimidine phosphate (HMP-P).</text>
</comment>
<comment type="catalytic activity">
    <reaction evidence="1">
        <text>4-amino-2-methyl-5-(diphosphooxymethyl)pyrimidine + H2O = 4-amino-2-methyl-5-(phosphooxymethyl)pyrimidine + phosphate + H(+)</text>
        <dbReference type="Rhea" id="RHEA:27914"/>
        <dbReference type="ChEBI" id="CHEBI:15377"/>
        <dbReference type="ChEBI" id="CHEBI:15378"/>
        <dbReference type="ChEBI" id="CHEBI:43474"/>
        <dbReference type="ChEBI" id="CHEBI:57841"/>
        <dbReference type="ChEBI" id="CHEBI:58354"/>
    </reaction>
</comment>
<comment type="cofactor">
    <cofactor evidence="1">
        <name>Mg(2+)</name>
        <dbReference type="ChEBI" id="CHEBI:18420"/>
    </cofactor>
</comment>
<comment type="similarity">
    <text evidence="1">Belongs to the HAD-like hydrolase superfamily. Cof family.</text>
</comment>
<comment type="sequence caution" evidence="2">
    <conflict type="erroneous initiation">
        <sequence resource="EMBL-CDS" id="ABI99904"/>
    </conflict>
    <text>Extended N-terminus.</text>
</comment>
<organism>
    <name type="scientific">Escherichia coli O1:K1 / APEC</name>
    <dbReference type="NCBI Taxonomy" id="405955"/>
    <lineage>
        <taxon>Bacteria</taxon>
        <taxon>Pseudomonadati</taxon>
        <taxon>Pseudomonadota</taxon>
        <taxon>Gammaproteobacteria</taxon>
        <taxon>Enterobacterales</taxon>
        <taxon>Enterobacteriaceae</taxon>
        <taxon>Escherichia</taxon>
    </lineage>
</organism>